<organism>
    <name type="scientific">Ruegeria sp. (strain TM1040)</name>
    <name type="common">Silicibacter sp.</name>
    <dbReference type="NCBI Taxonomy" id="292414"/>
    <lineage>
        <taxon>Bacteria</taxon>
        <taxon>Pseudomonadati</taxon>
        <taxon>Pseudomonadota</taxon>
        <taxon>Alphaproteobacteria</taxon>
        <taxon>Rhodobacterales</taxon>
        <taxon>Roseobacteraceae</taxon>
        <taxon>Ruegeria</taxon>
    </lineage>
</organism>
<gene>
    <name evidence="1" type="primary">dabA</name>
    <name type="ordered locus">TM1040_0833</name>
</gene>
<name>DABA_RUEST</name>
<dbReference type="EMBL" id="CP000377">
    <property type="protein sequence ID" value="ABF63566.1"/>
    <property type="molecule type" value="Genomic_DNA"/>
</dbReference>
<dbReference type="RefSeq" id="WP_011538178.1">
    <property type="nucleotide sequence ID" value="NC_008044.1"/>
</dbReference>
<dbReference type="STRING" id="292414.TM1040_0833"/>
<dbReference type="KEGG" id="sit:TM1040_0833"/>
<dbReference type="eggNOG" id="COG3002">
    <property type="taxonomic scope" value="Bacteria"/>
</dbReference>
<dbReference type="HOGENOM" id="CLU_009885_1_0_5"/>
<dbReference type="OrthoDB" id="9805101at2"/>
<dbReference type="Proteomes" id="UP000000636">
    <property type="component" value="Chromosome"/>
</dbReference>
<dbReference type="GO" id="GO:0005886">
    <property type="term" value="C:plasma membrane"/>
    <property type="evidence" value="ECO:0007669"/>
    <property type="project" value="UniProtKB-SubCell"/>
</dbReference>
<dbReference type="GO" id="GO:0008270">
    <property type="term" value="F:zinc ion binding"/>
    <property type="evidence" value="ECO:0007669"/>
    <property type="project" value="UniProtKB-UniRule"/>
</dbReference>
<dbReference type="HAMAP" id="MF_01871">
    <property type="entry name" value="DabA"/>
    <property type="match status" value="1"/>
</dbReference>
<dbReference type="InterPro" id="IPR018752">
    <property type="entry name" value="DabA"/>
</dbReference>
<dbReference type="PANTHER" id="PTHR38344:SF1">
    <property type="entry name" value="INORGANIC CARBON TRANSPORTER SUBUNIT DABA-RELATED"/>
    <property type="match status" value="1"/>
</dbReference>
<dbReference type="PANTHER" id="PTHR38344">
    <property type="entry name" value="UPF0753 PROTEIN AQ_863"/>
    <property type="match status" value="1"/>
</dbReference>
<dbReference type="Pfam" id="PF10070">
    <property type="entry name" value="DabA"/>
    <property type="match status" value="1"/>
</dbReference>
<feature type="chain" id="PRO_0000387299" description="Probable inorganic carbon transporter subunit DabA">
    <location>
        <begin position="1"/>
        <end position="805"/>
    </location>
</feature>
<feature type="binding site" evidence="1">
    <location>
        <position position="334"/>
    </location>
    <ligand>
        <name>Zn(2+)</name>
        <dbReference type="ChEBI" id="CHEBI:29105"/>
    </ligand>
</feature>
<feature type="binding site" evidence="1">
    <location>
        <position position="336"/>
    </location>
    <ligand>
        <name>Zn(2+)</name>
        <dbReference type="ChEBI" id="CHEBI:29105"/>
    </ligand>
</feature>
<feature type="binding site" evidence="1">
    <location>
        <position position="491"/>
    </location>
    <ligand>
        <name>Zn(2+)</name>
        <dbReference type="ChEBI" id="CHEBI:29105"/>
    </ligand>
</feature>
<feature type="binding site" evidence="1">
    <location>
        <position position="506"/>
    </location>
    <ligand>
        <name>Zn(2+)</name>
        <dbReference type="ChEBI" id="CHEBI:29105"/>
    </ligand>
</feature>
<protein>
    <recommendedName>
        <fullName evidence="1">Probable inorganic carbon transporter subunit DabA</fullName>
    </recommendedName>
</protein>
<sequence>MFAKLETYPAALLELVATANDAAKAIPPLFPLSSSVAVNPFLGQTEEPLAVTAARLARVGGTKIMPERAHWAAKLEAGDITETDLTEALAALKGRFNCPSLDDVKAALTVPSPTPQALPTVAELAADVSGLDWPALIEDRISAWAAGHFDEGQALWQQAKTGGTFSAWRDFAARDLTPEIQGLSGFCAFVAATNRSHWRAIGRASERLNLGTEAASTAFHRWLMTLGGWAQYGRYLLWQDELNGAQNSTVTELLAIRMVFDEALFALYEDQISARWAEVVAAHQTPVTPTPDLVIDAIWQDAAERAEQRRLAETLQSGAVQPVEGRAEVQAAFCIDVRSEVFRRALEAQDRQIETLGFAGFFGLASAHKAAGSDVVETRGPVLLQAGVSSQAKEAEELDLDRRYSARAKRAWGRFKLAAVSSFAFVEASGPLYAGELIRDSLLLGGKTKAEPAPALDPSISLATRIQMAKTVLTAMSLTSDFAKLVVLAGHGADVTNSPHESALQCGACGGHAGDVNARLLAALLNDRDVQKGLRDQGIEIPSDTVFLPALHHTTTDEVTLYEQDLSSYALQISEATRGKLKGWLTEAGRLARAERAQRLPRASSEASVHMRARDWAETRPEWGLAGCRAFVAAPRARTSGADLGGQAFLHNYVWQRDEGFGVLELILTAPVVVASWISLQYYGSTVAPAQFGGGNKLLHNVVGGIGVLEGNTGAPRAGLPWQSVHDGDKVQHDPLRLSVVIEAPREAMSEILSRHPGVRALFDNGWLHLIAMDDEGKLAWRYRGDLKWSRFDAPQSTPSALAAE</sequence>
<proteinExistence type="inferred from homology"/>
<evidence type="ECO:0000255" key="1">
    <source>
        <dbReference type="HAMAP-Rule" id="MF_01871"/>
    </source>
</evidence>
<accession>Q1GIF0</accession>
<comment type="function">
    <text evidence="1">Part of an energy-coupled inorganic carbon pump.</text>
</comment>
<comment type="cofactor">
    <cofactor evidence="1">
        <name>Zn(2+)</name>
        <dbReference type="ChEBI" id="CHEBI:29105"/>
    </cofactor>
</comment>
<comment type="subunit">
    <text evidence="1">Forms a complex with DabB.</text>
</comment>
<comment type="subcellular location">
    <subcellularLocation>
        <location evidence="1">Cell inner membrane</location>
        <topology evidence="1">Peripheral membrane protein</topology>
    </subcellularLocation>
</comment>
<comment type="similarity">
    <text evidence="1">Belongs to the inorganic carbon transporter (TC 9.A.2) DabA family.</text>
</comment>
<keyword id="KW-0997">Cell inner membrane</keyword>
<keyword id="KW-1003">Cell membrane</keyword>
<keyword id="KW-0472">Membrane</keyword>
<keyword id="KW-0479">Metal-binding</keyword>
<keyword id="KW-1185">Reference proteome</keyword>
<keyword id="KW-0813">Transport</keyword>
<keyword id="KW-0862">Zinc</keyword>
<reference key="1">
    <citation type="submission" date="2006-05" db="EMBL/GenBank/DDBJ databases">
        <title>Complete sequence of chromosome of Silicibacter sp. TM1040.</title>
        <authorList>
            <consortium name="US DOE Joint Genome Institute"/>
            <person name="Copeland A."/>
            <person name="Lucas S."/>
            <person name="Lapidus A."/>
            <person name="Barry K."/>
            <person name="Detter J.C."/>
            <person name="Glavina del Rio T."/>
            <person name="Hammon N."/>
            <person name="Israni S."/>
            <person name="Dalin E."/>
            <person name="Tice H."/>
            <person name="Pitluck S."/>
            <person name="Brettin T."/>
            <person name="Bruce D."/>
            <person name="Han C."/>
            <person name="Tapia R."/>
            <person name="Goodwin L."/>
            <person name="Thompson L.S."/>
            <person name="Gilna P."/>
            <person name="Schmutz J."/>
            <person name="Larimer F."/>
            <person name="Land M."/>
            <person name="Hauser L."/>
            <person name="Kyrpides N."/>
            <person name="Kim E."/>
            <person name="Belas R."/>
            <person name="Moran M.A."/>
            <person name="Buchan A."/>
            <person name="Gonzalez J.M."/>
            <person name="Schell M.A."/>
            <person name="Sun F."/>
            <person name="Richardson P."/>
        </authorList>
    </citation>
    <scope>NUCLEOTIDE SEQUENCE [LARGE SCALE GENOMIC DNA]</scope>
    <source>
        <strain>TM1040</strain>
    </source>
</reference>